<comment type="function">
    <text evidence="1">Catalyzes the phosphorylation of the hydroxyl group of 4-methyl-5-beta-hydroxyethylthiazole (THZ).</text>
</comment>
<comment type="catalytic activity">
    <reaction evidence="1">
        <text>5-(2-hydroxyethyl)-4-methylthiazole + ATP = 4-methyl-5-(2-phosphooxyethyl)-thiazole + ADP + H(+)</text>
        <dbReference type="Rhea" id="RHEA:24212"/>
        <dbReference type="ChEBI" id="CHEBI:15378"/>
        <dbReference type="ChEBI" id="CHEBI:17957"/>
        <dbReference type="ChEBI" id="CHEBI:30616"/>
        <dbReference type="ChEBI" id="CHEBI:58296"/>
        <dbReference type="ChEBI" id="CHEBI:456216"/>
        <dbReference type="EC" id="2.7.1.50"/>
    </reaction>
</comment>
<comment type="cofactor">
    <cofactor evidence="1">
        <name>Mg(2+)</name>
        <dbReference type="ChEBI" id="CHEBI:18420"/>
    </cofactor>
</comment>
<comment type="pathway">
    <text evidence="1">Cofactor biosynthesis; thiamine diphosphate biosynthesis; 4-methyl-5-(2-phosphoethyl)-thiazole from 5-(2-hydroxyethyl)-4-methylthiazole: step 1/1.</text>
</comment>
<comment type="similarity">
    <text evidence="1">Belongs to the Thz kinase family.</text>
</comment>
<keyword id="KW-0067">ATP-binding</keyword>
<keyword id="KW-0418">Kinase</keyword>
<keyword id="KW-0460">Magnesium</keyword>
<keyword id="KW-0479">Metal-binding</keyword>
<keyword id="KW-0547">Nucleotide-binding</keyword>
<keyword id="KW-0784">Thiamine biosynthesis</keyword>
<keyword id="KW-0808">Transferase</keyword>
<gene>
    <name evidence="1" type="primary">thiM2</name>
    <name type="ordered locus">SPG_0657</name>
</gene>
<name>THIM2_STRP4</name>
<evidence type="ECO:0000255" key="1">
    <source>
        <dbReference type="HAMAP-Rule" id="MF_00228"/>
    </source>
</evidence>
<proteinExistence type="inferred from homology"/>
<protein>
    <recommendedName>
        <fullName evidence="1">Hydroxyethylthiazole kinase 2</fullName>
        <ecNumber evidence="1">2.7.1.50</ecNumber>
    </recommendedName>
    <alternativeName>
        <fullName evidence="1">4-methyl-5-beta-hydroxyethylthiazole kinase 2</fullName>
        <shortName evidence="1">TH kinase 2</shortName>
        <shortName evidence="1">Thz kinase 2</shortName>
    </alternativeName>
</protein>
<dbReference type="EC" id="2.7.1.50" evidence="1"/>
<dbReference type="EMBL" id="CP001015">
    <property type="protein sequence ID" value="ACF56197.1"/>
    <property type="molecule type" value="Genomic_DNA"/>
</dbReference>
<dbReference type="SMR" id="B5E327"/>
<dbReference type="KEGG" id="spx:SPG_0657"/>
<dbReference type="HOGENOM" id="CLU_019943_0_0_9"/>
<dbReference type="UniPathway" id="UPA00060">
    <property type="reaction ID" value="UER00139"/>
</dbReference>
<dbReference type="GO" id="GO:0005524">
    <property type="term" value="F:ATP binding"/>
    <property type="evidence" value="ECO:0007669"/>
    <property type="project" value="UniProtKB-UniRule"/>
</dbReference>
<dbReference type="GO" id="GO:0004417">
    <property type="term" value="F:hydroxyethylthiazole kinase activity"/>
    <property type="evidence" value="ECO:0007669"/>
    <property type="project" value="UniProtKB-UniRule"/>
</dbReference>
<dbReference type="GO" id="GO:0000287">
    <property type="term" value="F:magnesium ion binding"/>
    <property type="evidence" value="ECO:0007669"/>
    <property type="project" value="UniProtKB-UniRule"/>
</dbReference>
<dbReference type="GO" id="GO:0009228">
    <property type="term" value="P:thiamine biosynthetic process"/>
    <property type="evidence" value="ECO:0007669"/>
    <property type="project" value="UniProtKB-KW"/>
</dbReference>
<dbReference type="GO" id="GO:0009229">
    <property type="term" value="P:thiamine diphosphate biosynthetic process"/>
    <property type="evidence" value="ECO:0007669"/>
    <property type="project" value="UniProtKB-UniRule"/>
</dbReference>
<dbReference type="CDD" id="cd01170">
    <property type="entry name" value="THZ_kinase"/>
    <property type="match status" value="1"/>
</dbReference>
<dbReference type="Gene3D" id="3.40.1190.20">
    <property type="match status" value="1"/>
</dbReference>
<dbReference type="HAMAP" id="MF_00228">
    <property type="entry name" value="Thz_kinase"/>
    <property type="match status" value="1"/>
</dbReference>
<dbReference type="InterPro" id="IPR000417">
    <property type="entry name" value="Hyethyz_kinase"/>
</dbReference>
<dbReference type="InterPro" id="IPR029056">
    <property type="entry name" value="Ribokinase-like"/>
</dbReference>
<dbReference type="Pfam" id="PF02110">
    <property type="entry name" value="HK"/>
    <property type="match status" value="1"/>
</dbReference>
<dbReference type="PIRSF" id="PIRSF000513">
    <property type="entry name" value="Thz_kinase"/>
    <property type="match status" value="1"/>
</dbReference>
<dbReference type="PRINTS" id="PR01099">
    <property type="entry name" value="HYETHTZKNASE"/>
</dbReference>
<dbReference type="SUPFAM" id="SSF53613">
    <property type="entry name" value="Ribokinase-like"/>
    <property type="match status" value="1"/>
</dbReference>
<organism>
    <name type="scientific">Streptococcus pneumoniae serotype 19F (strain G54)</name>
    <dbReference type="NCBI Taxonomy" id="512566"/>
    <lineage>
        <taxon>Bacteria</taxon>
        <taxon>Bacillati</taxon>
        <taxon>Bacillota</taxon>
        <taxon>Bacilli</taxon>
        <taxon>Lactobacillales</taxon>
        <taxon>Streptococcaceae</taxon>
        <taxon>Streptococcus</taxon>
    </lineage>
</organism>
<feature type="chain" id="PRO_0000383906" description="Hydroxyethylthiazole kinase 2">
    <location>
        <begin position="1"/>
        <end position="267"/>
    </location>
</feature>
<feature type="binding site" evidence="1">
    <location>
        <position position="41"/>
    </location>
    <ligand>
        <name>substrate</name>
    </ligand>
</feature>
<feature type="binding site" evidence="1">
    <location>
        <position position="116"/>
    </location>
    <ligand>
        <name>ATP</name>
        <dbReference type="ChEBI" id="CHEBI:30616"/>
    </ligand>
</feature>
<feature type="binding site" evidence="1">
    <location>
        <position position="166"/>
    </location>
    <ligand>
        <name>ATP</name>
        <dbReference type="ChEBI" id="CHEBI:30616"/>
    </ligand>
</feature>
<feature type="binding site" evidence="1">
    <location>
        <position position="193"/>
    </location>
    <ligand>
        <name>substrate</name>
    </ligand>
</feature>
<sequence length="267" mass="29085">MQEFTNPFPIGSSSLIHCMTNEISCEMLANGILALGCKPVMADDPREVLDFTKQSQALFINLGHLSAEKEKAIRIAASYAAQVCLPMVVDAVGVTASSIRKSLVRDLLDYRPTVLKGNMSEIRSLVGLKHHGVGVDASAKDQETEDLLQVLKDWCQTYHGMSFLVTGPKDLVVSKNQVAVLGNGCAELDWITGTGDLVGALTAVFLSQGKTGFEASCLAVSYLNIAAEKIVVQGMGLEEFRYQVLNQLSLLRRDENWLDTIKGEVYE</sequence>
<accession>B5E327</accession>
<reference key="1">
    <citation type="journal article" date="2001" name="Microb. Drug Resist.">
        <title>Annotated draft genomic sequence from a Streptococcus pneumoniae type 19F clinical isolate.</title>
        <authorList>
            <person name="Dopazo J."/>
            <person name="Mendoza A."/>
            <person name="Herrero J."/>
            <person name="Caldara F."/>
            <person name="Humbert Y."/>
            <person name="Friedli L."/>
            <person name="Guerrier M."/>
            <person name="Grand-Schenk E."/>
            <person name="Gandin C."/>
            <person name="de Francesco M."/>
            <person name="Polissi A."/>
            <person name="Buell G."/>
            <person name="Feger G."/>
            <person name="Garcia E."/>
            <person name="Peitsch M."/>
            <person name="Garcia-Bustos J.F."/>
        </authorList>
    </citation>
    <scope>NUCLEOTIDE SEQUENCE [LARGE SCALE GENOMIC DNA]</scope>
    <source>
        <strain>G54</strain>
    </source>
</reference>
<reference key="2">
    <citation type="submission" date="2008-03" db="EMBL/GenBank/DDBJ databases">
        <title>Pneumococcal beta glucoside metabolism investigated by whole genome comparison.</title>
        <authorList>
            <person name="Mulas L."/>
            <person name="Trappetti C."/>
            <person name="Hakenbeck R."/>
            <person name="Iannelli F."/>
            <person name="Pozzi G."/>
            <person name="Davidsen T.M."/>
            <person name="Tettelin H."/>
            <person name="Oggioni M."/>
        </authorList>
    </citation>
    <scope>NUCLEOTIDE SEQUENCE [LARGE SCALE GENOMIC DNA]</scope>
    <source>
        <strain>G54</strain>
    </source>
</reference>